<name>KLH15_CHICK</name>
<proteinExistence type="evidence at transcript level"/>
<comment type="function">
    <text evidence="1">Substrate-specific adapter for CUL3 E3 ubiquitin-protein ligase complex.</text>
</comment>
<comment type="pathway">
    <text>Protein modification; protein ubiquitination.</text>
</comment>
<comment type="subunit">
    <text evidence="1">Homodimer. Interacts with CUL3.</text>
</comment>
<comment type="subcellular location">
    <subcellularLocation>
        <location evidence="1">Nucleus</location>
    </subcellularLocation>
</comment>
<evidence type="ECO:0000250" key="1">
    <source>
        <dbReference type="UniProtKB" id="Q96M94"/>
    </source>
</evidence>
<evidence type="ECO:0000255" key="2">
    <source>
        <dbReference type="PROSITE-ProRule" id="PRU00037"/>
    </source>
</evidence>
<accession>Q5ZJU2</accession>
<organism>
    <name type="scientific">Gallus gallus</name>
    <name type="common">Chicken</name>
    <dbReference type="NCBI Taxonomy" id="9031"/>
    <lineage>
        <taxon>Eukaryota</taxon>
        <taxon>Metazoa</taxon>
        <taxon>Chordata</taxon>
        <taxon>Craniata</taxon>
        <taxon>Vertebrata</taxon>
        <taxon>Euteleostomi</taxon>
        <taxon>Archelosauria</taxon>
        <taxon>Archosauria</taxon>
        <taxon>Dinosauria</taxon>
        <taxon>Saurischia</taxon>
        <taxon>Theropoda</taxon>
        <taxon>Coelurosauria</taxon>
        <taxon>Aves</taxon>
        <taxon>Neognathae</taxon>
        <taxon>Galloanserae</taxon>
        <taxon>Galliformes</taxon>
        <taxon>Phasianidae</taxon>
        <taxon>Phasianinae</taxon>
        <taxon>Gallus</taxon>
    </lineage>
</organism>
<feature type="chain" id="PRO_0000223950" description="Kelch-like protein 15">
    <location>
        <begin position="1"/>
        <end position="488"/>
    </location>
</feature>
<feature type="domain" description="BTB" evidence="2">
    <location>
        <begin position="31"/>
        <end position="98"/>
    </location>
</feature>
<feature type="domain" description="BACK">
    <location>
        <begin position="133"/>
        <end position="237"/>
    </location>
</feature>
<feature type="repeat" description="Kelch 1">
    <location>
        <begin position="328"/>
        <end position="379"/>
    </location>
</feature>
<feature type="repeat" description="Kelch 2">
    <location>
        <begin position="381"/>
        <end position="426"/>
    </location>
</feature>
<feature type="repeat" description="Kelch 3">
    <location>
        <begin position="428"/>
        <end position="473"/>
    </location>
</feature>
<reference key="1">
    <citation type="journal article" date="2005" name="Genome Biol.">
        <title>Full-length cDNAs from chicken bursal lymphocytes to facilitate gene function analysis.</title>
        <authorList>
            <person name="Caldwell R.B."/>
            <person name="Kierzek A.M."/>
            <person name="Arakawa H."/>
            <person name="Bezzubov Y."/>
            <person name="Zaim J."/>
            <person name="Fiedler P."/>
            <person name="Kutter S."/>
            <person name="Blagodatski A."/>
            <person name="Kostovska D."/>
            <person name="Koter M."/>
            <person name="Plachy J."/>
            <person name="Carninci P."/>
            <person name="Hayashizaki Y."/>
            <person name="Buerstedde J.-M."/>
        </authorList>
    </citation>
    <scope>NUCLEOTIDE SEQUENCE [LARGE SCALE MRNA]</scope>
    <source>
        <strain>CB</strain>
        <tissue>Bursa of Fabricius</tissue>
    </source>
</reference>
<sequence length="488" mass="56659">MAGDVEGFSSSIHDTSVSAGFRALYEEGLLLDVTLVIEDHQFQAHKALLATQSDYFRIMFTADMRERDQDKIHLKGLTATGFSHVLQFMYYGTIELSMNTVHEILQAAMYVQLIEVVKFCCSFLLAKICLENCAEIMRLLDDFSVNIEGVREKLDSFLLENFVPLMSRPDFLSYLSFEKLMSYLDNDHLSRFPEIELYEAVQAWLRHDRRRWRHTDTIIQNIRFCLMTPSSVFEKVKTSEFYRYSRQLRHEVDQAMNYFHSVHQQPLMEMKSNKIRSAKPQTAVFRGMIGHSMVNSKILLLHKPRVWWELEGPQVPLRPDCLAIVNNFVFLLGGEELGPDGEFHASSKVFRYDPRQNTWLRMADMSVPRSEFAVGVIGRYVYAVAGRTRDETFYSTERYDITEDKWEFVDPYPVNKYGHEGTVLGNKLYITGGITSSSTSKQVCVFDPSKEGTVEQRTRRTQVATNCWENKCKMNYARCFHKMISYNA</sequence>
<protein>
    <recommendedName>
        <fullName>Kelch-like protein 15</fullName>
    </recommendedName>
</protein>
<keyword id="KW-0880">Kelch repeat</keyword>
<keyword id="KW-0539">Nucleus</keyword>
<keyword id="KW-1185">Reference proteome</keyword>
<keyword id="KW-0677">Repeat</keyword>
<keyword id="KW-0833">Ubl conjugation pathway</keyword>
<dbReference type="EMBL" id="AJ720342">
    <property type="protein sequence ID" value="CAG32001.1"/>
    <property type="molecule type" value="mRNA"/>
</dbReference>
<dbReference type="RefSeq" id="NP_001025973.1">
    <property type="nucleotide sequence ID" value="NM_001030802.1"/>
</dbReference>
<dbReference type="SMR" id="Q5ZJU2"/>
<dbReference type="FunCoup" id="Q5ZJU2">
    <property type="interactions" value="17"/>
</dbReference>
<dbReference type="STRING" id="9031.ENSGALP00000052364"/>
<dbReference type="PaxDb" id="9031-ENSGALP00000026313"/>
<dbReference type="GeneID" id="418598"/>
<dbReference type="KEGG" id="gga:418598"/>
<dbReference type="CTD" id="80311"/>
<dbReference type="VEuPathDB" id="HostDB:geneid_418598"/>
<dbReference type="eggNOG" id="KOG4441">
    <property type="taxonomic scope" value="Eukaryota"/>
</dbReference>
<dbReference type="InParanoid" id="Q5ZJU2"/>
<dbReference type="OrthoDB" id="45365at2759"/>
<dbReference type="PhylomeDB" id="Q5ZJU2"/>
<dbReference type="UniPathway" id="UPA00143"/>
<dbReference type="PRO" id="PR:Q5ZJU2"/>
<dbReference type="Proteomes" id="UP000000539">
    <property type="component" value="Unassembled WGS sequence"/>
</dbReference>
<dbReference type="GO" id="GO:0031463">
    <property type="term" value="C:Cul3-RING ubiquitin ligase complex"/>
    <property type="evidence" value="ECO:0007669"/>
    <property type="project" value="InterPro"/>
</dbReference>
<dbReference type="GO" id="GO:0005634">
    <property type="term" value="C:nucleus"/>
    <property type="evidence" value="ECO:0000318"/>
    <property type="project" value="GO_Central"/>
</dbReference>
<dbReference type="GO" id="GO:1990756">
    <property type="term" value="F:ubiquitin-like ligase-substrate adaptor activity"/>
    <property type="evidence" value="ECO:0000250"/>
    <property type="project" value="UniProtKB"/>
</dbReference>
<dbReference type="GO" id="GO:2000042">
    <property type="term" value="P:negative regulation of double-strand break repair via homologous recombination"/>
    <property type="evidence" value="ECO:0000250"/>
    <property type="project" value="UniProtKB"/>
</dbReference>
<dbReference type="GO" id="GO:0071630">
    <property type="term" value="P:nuclear protein quality control by the ubiquitin-proteasome system"/>
    <property type="evidence" value="ECO:0000318"/>
    <property type="project" value="GO_Central"/>
</dbReference>
<dbReference type="GO" id="GO:0016567">
    <property type="term" value="P:protein ubiquitination"/>
    <property type="evidence" value="ECO:0007669"/>
    <property type="project" value="UniProtKB-UniPathway"/>
</dbReference>
<dbReference type="CDD" id="cd18454">
    <property type="entry name" value="BACK_KLHL15"/>
    <property type="match status" value="1"/>
</dbReference>
<dbReference type="CDD" id="cd18244">
    <property type="entry name" value="BTB_POZ_KLHL15"/>
    <property type="match status" value="1"/>
</dbReference>
<dbReference type="FunFam" id="3.30.710.10:FF:000087">
    <property type="entry name" value="Kelch-like family member 15"/>
    <property type="match status" value="1"/>
</dbReference>
<dbReference type="FunFam" id="1.25.40.420:FF:000009">
    <property type="entry name" value="Kelch-like protein 15"/>
    <property type="match status" value="1"/>
</dbReference>
<dbReference type="Gene3D" id="1.25.40.420">
    <property type="match status" value="1"/>
</dbReference>
<dbReference type="Gene3D" id="2.120.10.80">
    <property type="entry name" value="Kelch-type beta propeller"/>
    <property type="match status" value="1"/>
</dbReference>
<dbReference type="Gene3D" id="3.30.710.10">
    <property type="entry name" value="Potassium Channel Kv1.1, Chain A"/>
    <property type="match status" value="1"/>
</dbReference>
<dbReference type="InterPro" id="IPR011705">
    <property type="entry name" value="BACK"/>
</dbReference>
<dbReference type="InterPro" id="IPR000210">
    <property type="entry name" value="BTB/POZ_dom"/>
</dbReference>
<dbReference type="InterPro" id="IPR030597">
    <property type="entry name" value="BTB_POZ_KLHL15"/>
</dbReference>
<dbReference type="InterPro" id="IPR015915">
    <property type="entry name" value="Kelch-typ_b-propeller"/>
</dbReference>
<dbReference type="InterPro" id="IPR006652">
    <property type="entry name" value="Kelch_1"/>
</dbReference>
<dbReference type="InterPro" id="IPR047030">
    <property type="entry name" value="KLHL15_BACK"/>
</dbReference>
<dbReference type="InterPro" id="IPR011333">
    <property type="entry name" value="SKP1/BTB/POZ_sf"/>
</dbReference>
<dbReference type="PANTHER" id="PTHR45632:SF12">
    <property type="entry name" value="KELCH-LIKE PROTEIN 15"/>
    <property type="match status" value="1"/>
</dbReference>
<dbReference type="PANTHER" id="PTHR45632">
    <property type="entry name" value="LD33804P"/>
    <property type="match status" value="1"/>
</dbReference>
<dbReference type="Pfam" id="PF07707">
    <property type="entry name" value="BACK"/>
    <property type="match status" value="1"/>
</dbReference>
<dbReference type="Pfam" id="PF00651">
    <property type="entry name" value="BTB"/>
    <property type="match status" value="1"/>
</dbReference>
<dbReference type="Pfam" id="PF01344">
    <property type="entry name" value="Kelch_1"/>
    <property type="match status" value="1"/>
</dbReference>
<dbReference type="SMART" id="SM00875">
    <property type="entry name" value="BACK"/>
    <property type="match status" value="1"/>
</dbReference>
<dbReference type="SMART" id="SM00225">
    <property type="entry name" value="BTB"/>
    <property type="match status" value="1"/>
</dbReference>
<dbReference type="SMART" id="SM00612">
    <property type="entry name" value="Kelch"/>
    <property type="match status" value="3"/>
</dbReference>
<dbReference type="SUPFAM" id="SSF117281">
    <property type="entry name" value="Kelch motif"/>
    <property type="match status" value="1"/>
</dbReference>
<dbReference type="SUPFAM" id="SSF54695">
    <property type="entry name" value="POZ domain"/>
    <property type="match status" value="1"/>
</dbReference>
<dbReference type="PROSITE" id="PS50097">
    <property type="entry name" value="BTB"/>
    <property type="match status" value="1"/>
</dbReference>
<gene>
    <name type="primary">KLHL15</name>
    <name type="ORF">RCJMB04_15l4</name>
</gene>